<feature type="chain" id="PRO_1000131765" description="Pole-localizer protein TmaR">
    <location>
        <begin position="1"/>
        <end position="109"/>
    </location>
</feature>
<feature type="coiled-coil region" evidence="1">
    <location>
        <begin position="14"/>
        <end position="41"/>
    </location>
</feature>
<reference key="1">
    <citation type="journal article" date="2008" name="DNA Res.">
        <title>Complete genome sequence and comparative analysis of the wild-type commensal Escherichia coli strain SE11 isolated from a healthy adult.</title>
        <authorList>
            <person name="Oshima K."/>
            <person name="Toh H."/>
            <person name="Ogura Y."/>
            <person name="Sasamoto H."/>
            <person name="Morita H."/>
            <person name="Park S.-H."/>
            <person name="Ooka T."/>
            <person name="Iyoda S."/>
            <person name="Taylor T.D."/>
            <person name="Hayashi T."/>
            <person name="Itoh K."/>
            <person name="Hattori M."/>
        </authorList>
    </citation>
    <scope>NUCLEOTIDE SEQUENCE [LARGE SCALE GENOMIC DNA]</scope>
    <source>
        <strain>SE11</strain>
    </source>
</reference>
<keyword id="KW-0175">Coiled coil</keyword>
<keyword id="KW-0963">Cytoplasm</keyword>
<evidence type="ECO:0000255" key="1">
    <source>
        <dbReference type="HAMAP-Rule" id="MF_00683"/>
    </source>
</evidence>
<accession>B6I833</accession>
<sequence>METTKPSFQDVLEFVRLFRRKNKLQREIQDVEKKIRDNQKRVLLLDNLSDYIKPGMSVEAIQGIIASMKGDYEDRVDDYIIKNAELSKERRDISKKLKAMGEMKNGEAK</sequence>
<comment type="function">
    <text evidence="1">Pole-localizer protein involved in the regulation of several cellular processes.</text>
</comment>
<comment type="subcellular location">
    <subcellularLocation>
        <location evidence="1">Cytoplasm</location>
    </subcellularLocation>
    <text evidence="1">Forms clusters that localize mainly near one pole of the cell.</text>
</comment>
<comment type="similarity">
    <text evidence="1">Belongs to the pole-localizer TmaR family.</text>
</comment>
<name>TMAR_ECOSE</name>
<protein>
    <recommendedName>
        <fullName evidence="1">Pole-localizer protein TmaR</fullName>
    </recommendedName>
</protein>
<gene>
    <name evidence="1" type="primary">tmaR</name>
    <name type="ordered locus">ECSE_2280</name>
</gene>
<organism>
    <name type="scientific">Escherichia coli (strain SE11)</name>
    <dbReference type="NCBI Taxonomy" id="409438"/>
    <lineage>
        <taxon>Bacteria</taxon>
        <taxon>Pseudomonadati</taxon>
        <taxon>Pseudomonadota</taxon>
        <taxon>Gammaproteobacteria</taxon>
        <taxon>Enterobacterales</taxon>
        <taxon>Enterobacteriaceae</taxon>
        <taxon>Escherichia</taxon>
    </lineage>
</organism>
<proteinExistence type="inferred from homology"/>
<dbReference type="EMBL" id="AP009240">
    <property type="protein sequence ID" value="BAG77804.1"/>
    <property type="molecule type" value="Genomic_DNA"/>
</dbReference>
<dbReference type="RefSeq" id="WP_000450409.1">
    <property type="nucleotide sequence ID" value="NC_011415.1"/>
</dbReference>
<dbReference type="SMR" id="B6I833"/>
<dbReference type="KEGG" id="ecy:ECSE_2280"/>
<dbReference type="HOGENOM" id="CLU_153146_0_0_6"/>
<dbReference type="Proteomes" id="UP000008199">
    <property type="component" value="Chromosome"/>
</dbReference>
<dbReference type="GO" id="GO:0005829">
    <property type="term" value="C:cytosol"/>
    <property type="evidence" value="ECO:0007669"/>
    <property type="project" value="TreeGrafter"/>
</dbReference>
<dbReference type="HAMAP" id="MF_00683">
    <property type="entry name" value="Pole_loc_TmaR"/>
    <property type="match status" value="1"/>
</dbReference>
<dbReference type="InterPro" id="IPR007458">
    <property type="entry name" value="DUF496"/>
</dbReference>
<dbReference type="InterPro" id="IPR053375">
    <property type="entry name" value="UPF0265"/>
</dbReference>
<dbReference type="NCBIfam" id="NF003844">
    <property type="entry name" value="PRK05423.1"/>
    <property type="match status" value="1"/>
</dbReference>
<dbReference type="NCBIfam" id="NF040881">
    <property type="entry name" value="PTS_reg_TmaR"/>
    <property type="match status" value="1"/>
</dbReference>
<dbReference type="PANTHER" id="PTHR39591">
    <property type="entry name" value="UPF0265 PROTEIN YEEX"/>
    <property type="match status" value="1"/>
</dbReference>
<dbReference type="PANTHER" id="PTHR39591:SF1">
    <property type="entry name" value="UPF0265 PROTEIN YEEX"/>
    <property type="match status" value="1"/>
</dbReference>
<dbReference type="Pfam" id="PF04363">
    <property type="entry name" value="DUF496"/>
    <property type="match status" value="1"/>
</dbReference>
<dbReference type="PIRSF" id="PIRSF028773">
    <property type="entry name" value="UCP028773"/>
    <property type="match status" value="1"/>
</dbReference>